<protein>
    <recommendedName>
        <fullName>Probable WRKY transcription factor 35</fullName>
    </recommendedName>
    <alternativeName>
        <fullName>WRKY DNA-binding protein 35</fullName>
    </alternativeName>
</protein>
<proteinExistence type="evidence at transcript level"/>
<sequence>MDNFQGDLTDVVRGIGSGHVSPSPGPPEGPSPSSMSPPPTSDLHVEFPSAATSASCLANPFGDPFVSMKDPLIHLPASYISGAGDNKSNKSFAIFPKIFEDDHIKSQCSVFPRIKISQSNNIHDASTCNSPAITVSSAAVAASPWGMINVNTTNSPRNCLLVDNNNNTSSCSQVQISSSPRNLGIKRRKSQAKKVVCIPAPAAMNSRSSGEVVPSDLWAWRKYGQKPIKGSPYPRGYYRCSSSKGCSARKQVERSRTDPNMLVITYTSEHNHPWPTQRNALAGSTRSSSSSSLNPSSKSSTAAATTSPSSRVFQNNSSKDEPNNSNLPSSSTHPPFDAAAIKEENVEERQEKMEFDYNDVENTYRPELLQEFQHQPEDFFADLDELEGDSLTMLLSHSSGGGNMENKTTIPDVFSDFFDDDESSRSL</sequence>
<keyword id="KW-0025">Alternative splicing</keyword>
<keyword id="KW-0238">DNA-binding</keyword>
<keyword id="KW-0539">Nucleus</keyword>
<keyword id="KW-1185">Reference proteome</keyword>
<keyword id="KW-0804">Transcription</keyword>
<keyword id="KW-0805">Transcription regulation</keyword>
<dbReference type="EMBL" id="AF404863">
    <property type="protein sequence ID" value="AAK96201.1"/>
    <property type="molecule type" value="mRNA"/>
</dbReference>
<dbReference type="EMBL" id="AC004238">
    <property type="protein sequence ID" value="AAC12823.1"/>
    <property type="molecule type" value="Genomic_DNA"/>
</dbReference>
<dbReference type="EMBL" id="CP002685">
    <property type="protein sequence ID" value="AEC09027.1"/>
    <property type="molecule type" value="Genomic_DNA"/>
</dbReference>
<dbReference type="EMBL" id="BT002781">
    <property type="protein sequence ID" value="AAO22609.1"/>
    <property type="molecule type" value="mRNA"/>
</dbReference>
<dbReference type="PIR" id="T00465">
    <property type="entry name" value="T00465"/>
</dbReference>
<dbReference type="RefSeq" id="NP_181029.1">
    <molecule id="O64747-1"/>
    <property type="nucleotide sequence ID" value="NM_129036.2"/>
</dbReference>
<dbReference type="SMR" id="O64747"/>
<dbReference type="BioGRID" id="3394">
    <property type="interactions" value="1"/>
</dbReference>
<dbReference type="FunCoup" id="O64747">
    <property type="interactions" value="470"/>
</dbReference>
<dbReference type="IntAct" id="O64747">
    <property type="interactions" value="4"/>
</dbReference>
<dbReference type="STRING" id="3702.O64747"/>
<dbReference type="PaxDb" id="3702-AT2G34830.1"/>
<dbReference type="ProteomicsDB" id="234345">
    <molecule id="O64747-1"/>
</dbReference>
<dbReference type="EnsemblPlants" id="AT2G34830.1">
    <molecule id="O64747-1"/>
    <property type="protein sequence ID" value="AT2G34830.1"/>
    <property type="gene ID" value="AT2G34830"/>
</dbReference>
<dbReference type="GeneID" id="818048"/>
<dbReference type="Gramene" id="AT2G34830.1">
    <molecule id="O64747-1"/>
    <property type="protein sequence ID" value="AT2G34830.1"/>
    <property type="gene ID" value="AT2G34830"/>
</dbReference>
<dbReference type="KEGG" id="ath:AT2G34830"/>
<dbReference type="Araport" id="AT2G34830"/>
<dbReference type="TAIR" id="AT2G34830">
    <property type="gene designation" value="WRKY35"/>
</dbReference>
<dbReference type="eggNOG" id="ENOG502QU8N">
    <property type="taxonomic scope" value="Eukaryota"/>
</dbReference>
<dbReference type="HOGENOM" id="CLU_029232_3_0_1"/>
<dbReference type="InParanoid" id="O64747"/>
<dbReference type="OrthoDB" id="1937086at2759"/>
<dbReference type="PhylomeDB" id="O64747"/>
<dbReference type="PRO" id="PR:O64747"/>
<dbReference type="Proteomes" id="UP000006548">
    <property type="component" value="Chromosome 2"/>
</dbReference>
<dbReference type="ExpressionAtlas" id="O64747">
    <property type="expression patterns" value="baseline and differential"/>
</dbReference>
<dbReference type="GO" id="GO:0005634">
    <property type="term" value="C:nucleus"/>
    <property type="evidence" value="ECO:0007669"/>
    <property type="project" value="UniProtKB-SubCell"/>
</dbReference>
<dbReference type="GO" id="GO:0003700">
    <property type="term" value="F:DNA-binding transcription factor activity"/>
    <property type="evidence" value="ECO:0000250"/>
    <property type="project" value="TAIR"/>
</dbReference>
<dbReference type="GO" id="GO:0043565">
    <property type="term" value="F:sequence-specific DNA binding"/>
    <property type="evidence" value="ECO:0007669"/>
    <property type="project" value="InterPro"/>
</dbReference>
<dbReference type="GO" id="GO:0009793">
    <property type="term" value="P:embryo development ending in seed dormancy"/>
    <property type="evidence" value="ECO:0000315"/>
    <property type="project" value="TAIR"/>
</dbReference>
<dbReference type="GO" id="GO:0009555">
    <property type="term" value="P:pollen development"/>
    <property type="evidence" value="ECO:0000315"/>
    <property type="project" value="TAIR"/>
</dbReference>
<dbReference type="FunFam" id="2.20.25.80:FF:000005">
    <property type="entry name" value="probable WRKY transcription factor 14"/>
    <property type="match status" value="1"/>
</dbReference>
<dbReference type="Gene3D" id="2.20.25.80">
    <property type="entry name" value="WRKY domain"/>
    <property type="match status" value="1"/>
</dbReference>
<dbReference type="InterPro" id="IPR003657">
    <property type="entry name" value="WRKY_dom"/>
</dbReference>
<dbReference type="InterPro" id="IPR036576">
    <property type="entry name" value="WRKY_dom_sf"/>
</dbReference>
<dbReference type="InterPro" id="IPR044810">
    <property type="entry name" value="WRKY_plant"/>
</dbReference>
<dbReference type="PANTHER" id="PTHR32096:SF18">
    <property type="entry name" value="DISEASE RESISTANCE PROTEIN RRS1B-RELATED"/>
    <property type="match status" value="1"/>
</dbReference>
<dbReference type="PANTHER" id="PTHR32096">
    <property type="entry name" value="WRKY TRANSCRIPTION FACTOR 30-RELATED-RELATED"/>
    <property type="match status" value="1"/>
</dbReference>
<dbReference type="Pfam" id="PF03106">
    <property type="entry name" value="WRKY"/>
    <property type="match status" value="1"/>
</dbReference>
<dbReference type="PIRSF" id="PIRSF038153">
    <property type="entry name" value="TF_WRKY_IIe"/>
    <property type="match status" value="1"/>
</dbReference>
<dbReference type="SMART" id="SM00774">
    <property type="entry name" value="WRKY"/>
    <property type="match status" value="1"/>
</dbReference>
<dbReference type="SUPFAM" id="SSF118290">
    <property type="entry name" value="WRKY DNA-binding domain"/>
    <property type="match status" value="1"/>
</dbReference>
<dbReference type="PROSITE" id="PS50811">
    <property type="entry name" value="WRKY"/>
    <property type="match status" value="1"/>
</dbReference>
<name>WRK35_ARATH</name>
<feature type="chain" id="PRO_0000133677" description="Probable WRKY transcription factor 35">
    <location>
        <begin position="1"/>
        <end position="427"/>
    </location>
</feature>
<feature type="DNA-binding region" description="WRKY" evidence="2">
    <location>
        <begin position="209"/>
        <end position="275"/>
    </location>
</feature>
<feature type="region of interest" description="Disordered" evidence="3">
    <location>
        <begin position="1"/>
        <end position="45"/>
    </location>
</feature>
<feature type="region of interest" description="Disordered" evidence="3">
    <location>
        <begin position="266"/>
        <end position="336"/>
    </location>
</feature>
<feature type="compositionally biased region" description="Pro residues" evidence="3">
    <location>
        <begin position="23"/>
        <end position="40"/>
    </location>
</feature>
<feature type="compositionally biased region" description="Low complexity" evidence="3">
    <location>
        <begin position="284"/>
        <end position="310"/>
    </location>
</feature>
<feature type="compositionally biased region" description="Polar residues" evidence="3">
    <location>
        <begin position="311"/>
        <end position="333"/>
    </location>
</feature>
<feature type="splice variant" id="VSP_007125" description="In isoform 2." evidence="4">
    <location>
        <begin position="1"/>
        <end position="66"/>
    </location>
</feature>
<feature type="splice variant" id="VSP_007126" description="In isoform 2." evidence="4">
    <original>SMKDPLIHLP</original>
    <variation>MPLDVLGRTH</variation>
    <location>
        <begin position="67"/>
        <end position="76"/>
    </location>
</feature>
<feature type="splice variant" id="VSP_007127" description="In isoform 2." evidence="4">
    <location>
        <begin position="235"/>
        <end position="238"/>
    </location>
</feature>
<reference key="1">
    <citation type="submission" date="2001-08" db="EMBL/GenBank/DDBJ databases">
        <authorList>
            <person name="Ulker B."/>
            <person name="Kushnir S."/>
            <person name="Somssich I.E."/>
        </authorList>
    </citation>
    <scope>NUCLEOTIDE SEQUENCE [MRNA] (ISOFORM 1)</scope>
    <source>
        <strain>cv. Columbia</strain>
        <tissue>Flower</tissue>
    </source>
</reference>
<reference key="2">
    <citation type="journal article" date="1999" name="Nature">
        <title>Sequence and analysis of chromosome 2 of the plant Arabidopsis thaliana.</title>
        <authorList>
            <person name="Lin X."/>
            <person name="Kaul S."/>
            <person name="Rounsley S.D."/>
            <person name="Shea T.P."/>
            <person name="Benito M.-I."/>
            <person name="Town C.D."/>
            <person name="Fujii C.Y."/>
            <person name="Mason T.M."/>
            <person name="Bowman C.L."/>
            <person name="Barnstead M.E."/>
            <person name="Feldblyum T.V."/>
            <person name="Buell C.R."/>
            <person name="Ketchum K.A."/>
            <person name="Lee J.J."/>
            <person name="Ronning C.M."/>
            <person name="Koo H.L."/>
            <person name="Moffat K.S."/>
            <person name="Cronin L.A."/>
            <person name="Shen M."/>
            <person name="Pai G."/>
            <person name="Van Aken S."/>
            <person name="Umayam L."/>
            <person name="Tallon L.J."/>
            <person name="Gill J.E."/>
            <person name="Adams M.D."/>
            <person name="Carrera A.J."/>
            <person name="Creasy T.H."/>
            <person name="Goodman H.M."/>
            <person name="Somerville C.R."/>
            <person name="Copenhaver G.P."/>
            <person name="Preuss D."/>
            <person name="Nierman W.C."/>
            <person name="White O."/>
            <person name="Eisen J.A."/>
            <person name="Salzberg S.L."/>
            <person name="Fraser C.M."/>
            <person name="Venter J.C."/>
        </authorList>
    </citation>
    <scope>NUCLEOTIDE SEQUENCE [LARGE SCALE GENOMIC DNA]</scope>
    <source>
        <strain>cv. Columbia</strain>
    </source>
</reference>
<reference key="3">
    <citation type="journal article" date="2017" name="Plant J.">
        <title>Araport11: a complete reannotation of the Arabidopsis thaliana reference genome.</title>
        <authorList>
            <person name="Cheng C.Y."/>
            <person name="Krishnakumar V."/>
            <person name="Chan A.P."/>
            <person name="Thibaud-Nissen F."/>
            <person name="Schobel S."/>
            <person name="Town C.D."/>
        </authorList>
    </citation>
    <scope>GENOME REANNOTATION</scope>
    <source>
        <strain>cv. Columbia</strain>
    </source>
</reference>
<reference key="4">
    <citation type="journal article" date="2003" name="Science">
        <title>Empirical analysis of transcriptional activity in the Arabidopsis genome.</title>
        <authorList>
            <person name="Yamada K."/>
            <person name="Lim J."/>
            <person name="Dale J.M."/>
            <person name="Chen H."/>
            <person name="Shinn P."/>
            <person name="Palm C.J."/>
            <person name="Southwick A.M."/>
            <person name="Wu H.C."/>
            <person name="Kim C.J."/>
            <person name="Nguyen M."/>
            <person name="Pham P.K."/>
            <person name="Cheuk R.F."/>
            <person name="Karlin-Newmann G."/>
            <person name="Liu S.X."/>
            <person name="Lam B."/>
            <person name="Sakano H."/>
            <person name="Wu T."/>
            <person name="Yu G."/>
            <person name="Miranda M."/>
            <person name="Quach H.L."/>
            <person name="Tripp M."/>
            <person name="Chang C.H."/>
            <person name="Lee J.M."/>
            <person name="Toriumi M.J."/>
            <person name="Chan M.M."/>
            <person name="Tang C.C."/>
            <person name="Onodera C.S."/>
            <person name="Deng J.M."/>
            <person name="Akiyama K."/>
            <person name="Ansari Y."/>
            <person name="Arakawa T."/>
            <person name="Banh J."/>
            <person name="Banno F."/>
            <person name="Bowser L."/>
            <person name="Brooks S.Y."/>
            <person name="Carninci P."/>
            <person name="Chao Q."/>
            <person name="Choy N."/>
            <person name="Enju A."/>
            <person name="Goldsmith A.D."/>
            <person name="Gurjal M."/>
            <person name="Hansen N.F."/>
            <person name="Hayashizaki Y."/>
            <person name="Johnson-Hopson C."/>
            <person name="Hsuan V.W."/>
            <person name="Iida K."/>
            <person name="Karnes M."/>
            <person name="Khan S."/>
            <person name="Koesema E."/>
            <person name="Ishida J."/>
            <person name="Jiang P.X."/>
            <person name="Jones T."/>
            <person name="Kawai J."/>
            <person name="Kamiya A."/>
            <person name="Meyers C."/>
            <person name="Nakajima M."/>
            <person name="Narusaka M."/>
            <person name="Seki M."/>
            <person name="Sakurai T."/>
            <person name="Satou M."/>
            <person name="Tamse R."/>
            <person name="Vaysberg M."/>
            <person name="Wallender E.K."/>
            <person name="Wong C."/>
            <person name="Yamamura Y."/>
            <person name="Yuan S."/>
            <person name="Shinozaki K."/>
            <person name="Davis R.W."/>
            <person name="Theologis A."/>
            <person name="Ecker J.R."/>
        </authorList>
    </citation>
    <scope>NUCLEOTIDE SEQUENCE [LARGE SCALE MRNA] (ISOFORM 2)</scope>
    <source>
        <strain>cv. Columbia</strain>
    </source>
</reference>
<evidence type="ECO:0000250" key="1"/>
<evidence type="ECO:0000255" key="2">
    <source>
        <dbReference type="PROSITE-ProRule" id="PRU00223"/>
    </source>
</evidence>
<evidence type="ECO:0000256" key="3">
    <source>
        <dbReference type="SAM" id="MobiDB-lite"/>
    </source>
</evidence>
<evidence type="ECO:0000303" key="4">
    <source>
    </source>
</evidence>
<evidence type="ECO:0000305" key="5"/>
<accession>O64747</accession>
<comment type="function">
    <text evidence="1">Transcription factor. Interacts specifically with the W box (5'-(T)TGAC[CT]-3'), a frequently occurring elicitor-responsive cis-acting element (By similarity).</text>
</comment>
<comment type="subcellular location">
    <subcellularLocation>
        <location evidence="5">Nucleus</location>
    </subcellularLocation>
</comment>
<comment type="alternative products">
    <event type="alternative splicing"/>
    <isoform>
        <id>O64747-1</id>
        <name>1</name>
        <sequence type="displayed"/>
    </isoform>
    <isoform>
        <id>O64747-2</id>
        <name>2</name>
        <sequence type="described" ref="VSP_007125 VSP_007126 VSP_007127"/>
    </isoform>
</comment>
<comment type="similarity">
    <text evidence="5">Belongs to the WRKY group II-e family.</text>
</comment>
<gene>
    <name type="primary">WRKY35</name>
    <name type="ordered locus">At2g34830</name>
    <name type="ORF">F19I3.6</name>
</gene>
<organism>
    <name type="scientific">Arabidopsis thaliana</name>
    <name type="common">Mouse-ear cress</name>
    <dbReference type="NCBI Taxonomy" id="3702"/>
    <lineage>
        <taxon>Eukaryota</taxon>
        <taxon>Viridiplantae</taxon>
        <taxon>Streptophyta</taxon>
        <taxon>Embryophyta</taxon>
        <taxon>Tracheophyta</taxon>
        <taxon>Spermatophyta</taxon>
        <taxon>Magnoliopsida</taxon>
        <taxon>eudicotyledons</taxon>
        <taxon>Gunneridae</taxon>
        <taxon>Pentapetalae</taxon>
        <taxon>rosids</taxon>
        <taxon>malvids</taxon>
        <taxon>Brassicales</taxon>
        <taxon>Brassicaceae</taxon>
        <taxon>Camelineae</taxon>
        <taxon>Arabidopsis</taxon>
    </lineage>
</organism>